<keyword id="KW-0997">Cell inner membrane</keyword>
<keyword id="KW-1003">Cell membrane</keyword>
<keyword id="KW-0472">Membrane</keyword>
<keyword id="KW-0653">Protein transport</keyword>
<keyword id="KW-1185">Reference proteome</keyword>
<keyword id="KW-0811">Translocation</keyword>
<keyword id="KW-0812">Transmembrane</keyword>
<keyword id="KW-1133">Transmembrane helix</keyword>
<keyword id="KW-0813">Transport</keyword>
<proteinExistence type="inferred from homology"/>
<accession>P0AG97</accession>
<accession>P16920</accession>
<feature type="chain" id="PRO_0000104165" description="Protein translocase subunit SecE">
    <location>
        <begin position="1"/>
        <end position="127"/>
    </location>
</feature>
<feature type="topological domain" description="Cytoplasmic" evidence="1">
    <location>
        <begin position="1"/>
        <end position="19"/>
    </location>
</feature>
<feature type="transmembrane region" description="Helical" evidence="2">
    <location>
        <begin position="20"/>
        <end position="32"/>
    </location>
</feature>
<feature type="topological domain" description="Periplasmic" evidence="1">
    <location>
        <begin position="33"/>
        <end position="48"/>
    </location>
</feature>
<feature type="transmembrane region" description="Helical" evidence="2">
    <location>
        <begin position="49"/>
        <end position="60"/>
    </location>
</feature>
<feature type="topological domain" description="Cytoplasmic" evidence="1">
    <location>
        <begin position="61"/>
        <end position="97"/>
    </location>
</feature>
<feature type="transmembrane region" description="Helical" evidence="2">
    <location>
        <begin position="98"/>
        <end position="115"/>
    </location>
</feature>
<feature type="topological domain" description="Periplasmic" evidence="1">
    <location>
        <begin position="116"/>
        <end position="127"/>
    </location>
</feature>
<evidence type="ECO:0000250" key="1"/>
<evidence type="ECO:0000255" key="2">
    <source>
        <dbReference type="HAMAP-Rule" id="MF_00422"/>
    </source>
</evidence>
<organism>
    <name type="scientific">Escherichia coli O6:H1 (strain CFT073 / ATCC 700928 / UPEC)</name>
    <dbReference type="NCBI Taxonomy" id="199310"/>
    <lineage>
        <taxon>Bacteria</taxon>
        <taxon>Pseudomonadati</taxon>
        <taxon>Pseudomonadota</taxon>
        <taxon>Gammaproteobacteria</taxon>
        <taxon>Enterobacterales</taxon>
        <taxon>Enterobacteriaceae</taxon>
        <taxon>Escherichia</taxon>
    </lineage>
</organism>
<dbReference type="EMBL" id="AE014075">
    <property type="protein sequence ID" value="AAN83364.1"/>
    <property type="molecule type" value="Genomic_DNA"/>
</dbReference>
<dbReference type="RefSeq" id="WP_001275702.1">
    <property type="nucleotide sequence ID" value="NZ_CP051263.1"/>
</dbReference>
<dbReference type="SMR" id="P0AG97"/>
<dbReference type="STRING" id="199310.c4936"/>
<dbReference type="GeneID" id="93777913"/>
<dbReference type="KEGG" id="ecc:c4936"/>
<dbReference type="eggNOG" id="COG0690">
    <property type="taxonomic scope" value="Bacteria"/>
</dbReference>
<dbReference type="HOGENOM" id="CLU_113663_0_1_6"/>
<dbReference type="BioCyc" id="ECOL199310:C4936-MONOMER"/>
<dbReference type="Proteomes" id="UP000001410">
    <property type="component" value="Chromosome"/>
</dbReference>
<dbReference type="GO" id="GO:0005886">
    <property type="term" value="C:plasma membrane"/>
    <property type="evidence" value="ECO:0007669"/>
    <property type="project" value="UniProtKB-SubCell"/>
</dbReference>
<dbReference type="GO" id="GO:0008320">
    <property type="term" value="F:protein transmembrane transporter activity"/>
    <property type="evidence" value="ECO:0007669"/>
    <property type="project" value="UniProtKB-UniRule"/>
</dbReference>
<dbReference type="GO" id="GO:0065002">
    <property type="term" value="P:intracellular protein transmembrane transport"/>
    <property type="evidence" value="ECO:0007669"/>
    <property type="project" value="UniProtKB-UniRule"/>
</dbReference>
<dbReference type="GO" id="GO:0009306">
    <property type="term" value="P:protein secretion"/>
    <property type="evidence" value="ECO:0007669"/>
    <property type="project" value="UniProtKB-UniRule"/>
</dbReference>
<dbReference type="GO" id="GO:0006605">
    <property type="term" value="P:protein targeting"/>
    <property type="evidence" value="ECO:0007669"/>
    <property type="project" value="UniProtKB-UniRule"/>
</dbReference>
<dbReference type="GO" id="GO:0043952">
    <property type="term" value="P:protein transport by the Sec complex"/>
    <property type="evidence" value="ECO:0007669"/>
    <property type="project" value="UniProtKB-UniRule"/>
</dbReference>
<dbReference type="FunFam" id="1.20.5.1030:FF:000001">
    <property type="entry name" value="Preprotein translocase subunit SecE"/>
    <property type="match status" value="1"/>
</dbReference>
<dbReference type="Gene3D" id="1.20.5.1030">
    <property type="entry name" value="Preprotein translocase secy subunit"/>
    <property type="match status" value="1"/>
</dbReference>
<dbReference type="HAMAP" id="MF_00422">
    <property type="entry name" value="SecE"/>
    <property type="match status" value="1"/>
</dbReference>
<dbReference type="InterPro" id="IPR005807">
    <property type="entry name" value="SecE_bac"/>
</dbReference>
<dbReference type="InterPro" id="IPR038379">
    <property type="entry name" value="SecE_sf"/>
</dbReference>
<dbReference type="InterPro" id="IPR001901">
    <property type="entry name" value="Translocase_SecE/Sec61-g"/>
</dbReference>
<dbReference type="NCBIfam" id="NF004372">
    <property type="entry name" value="PRK05740.1-2"/>
    <property type="match status" value="1"/>
</dbReference>
<dbReference type="NCBIfam" id="NF004374">
    <property type="entry name" value="PRK05740.1-5"/>
    <property type="match status" value="1"/>
</dbReference>
<dbReference type="NCBIfam" id="TIGR00964">
    <property type="entry name" value="secE_bact"/>
    <property type="match status" value="1"/>
</dbReference>
<dbReference type="PANTHER" id="PTHR33910">
    <property type="entry name" value="PROTEIN TRANSLOCASE SUBUNIT SECE"/>
    <property type="match status" value="1"/>
</dbReference>
<dbReference type="PANTHER" id="PTHR33910:SF1">
    <property type="entry name" value="PROTEIN TRANSLOCASE SUBUNIT SECE"/>
    <property type="match status" value="1"/>
</dbReference>
<dbReference type="Pfam" id="PF00584">
    <property type="entry name" value="SecE"/>
    <property type="match status" value="1"/>
</dbReference>
<dbReference type="PRINTS" id="PR01650">
    <property type="entry name" value="SECETRNLCASE"/>
</dbReference>
<dbReference type="PROSITE" id="PS01067">
    <property type="entry name" value="SECE_SEC61G"/>
    <property type="match status" value="1"/>
</dbReference>
<name>SECE_ECOL6</name>
<comment type="function">
    <text evidence="2">Essential subunit of the Sec protein translocation channel SecYEG. Clamps together the 2 halves of SecY. May contact the channel plug during translocation.</text>
</comment>
<comment type="subunit">
    <text evidence="2">Component of the Sec protein translocase complex. Heterotrimer consisting of SecY, SecE and SecG subunits. The heterotrimers can form oligomers, although 1 heterotrimer is thought to be able to translocate proteins. Interacts with the ribosome. Interacts with SecDF, and other proteins may be involved. Interacts with SecA.</text>
</comment>
<comment type="subcellular location">
    <subcellularLocation>
        <location evidence="2">Cell inner membrane</location>
        <topology evidence="2">Multi-pass membrane protein</topology>
    </subcellularLocation>
</comment>
<comment type="similarity">
    <text evidence="2">Belongs to the SecE/SEC61-gamma family.</text>
</comment>
<reference key="1">
    <citation type="journal article" date="2002" name="Proc. Natl. Acad. Sci. U.S.A.">
        <title>Extensive mosaic structure revealed by the complete genome sequence of uropathogenic Escherichia coli.</title>
        <authorList>
            <person name="Welch R.A."/>
            <person name="Burland V."/>
            <person name="Plunkett G. III"/>
            <person name="Redford P."/>
            <person name="Roesch P."/>
            <person name="Rasko D."/>
            <person name="Buckles E.L."/>
            <person name="Liou S.-R."/>
            <person name="Boutin A."/>
            <person name="Hackett J."/>
            <person name="Stroud D."/>
            <person name="Mayhew G.F."/>
            <person name="Rose D.J."/>
            <person name="Zhou S."/>
            <person name="Schwartz D.C."/>
            <person name="Perna N.T."/>
            <person name="Mobley H.L.T."/>
            <person name="Donnenberg M.S."/>
            <person name="Blattner F.R."/>
        </authorList>
    </citation>
    <scope>NUCLEOTIDE SEQUENCE [LARGE SCALE GENOMIC DNA]</scope>
    <source>
        <strain>CFT073 / ATCC 700928 / UPEC</strain>
    </source>
</reference>
<gene>
    <name evidence="2" type="primary">secE</name>
    <name type="ordered locus">c4936</name>
</gene>
<protein>
    <recommendedName>
        <fullName evidence="2">Protein translocase subunit SecE</fullName>
    </recommendedName>
</protein>
<sequence>MSANTEAQGSGRGLEAMKWVVVVALLLVAIVGNYLYRDIMLPLRALAVVILIAAAGGVALLTTKGKATVAFAREARTEVRKVIWPTRQETLHTTLIVAAVTAVMSLILWGLDGILVRLVSFITGLRF</sequence>